<reference key="1">
    <citation type="submission" date="2006-09" db="EMBL/GenBank/DDBJ databases">
        <authorList>
            <consortium name="The Klebsiella pneumonia Genome Sequencing Project"/>
            <person name="McClelland M."/>
            <person name="Sanderson E.K."/>
            <person name="Spieth J."/>
            <person name="Clifton W.S."/>
            <person name="Latreille P."/>
            <person name="Sabo A."/>
            <person name="Pepin K."/>
            <person name="Bhonagiri V."/>
            <person name="Porwollik S."/>
            <person name="Ali J."/>
            <person name="Wilson R.K."/>
        </authorList>
    </citation>
    <scope>NUCLEOTIDE SEQUENCE [LARGE SCALE GENOMIC DNA]</scope>
    <source>
        <strain>ATCC 700721 / MGH 78578</strain>
    </source>
</reference>
<keyword id="KW-0067">ATP-binding</keyword>
<keyword id="KW-0143">Chaperone</keyword>
<keyword id="KW-0963">Cytoplasm</keyword>
<keyword id="KW-0547">Nucleotide-binding</keyword>
<keyword id="KW-0346">Stress response</keyword>
<feature type="chain" id="PRO_1000014925" description="Chaperone protein HtpG">
    <location>
        <begin position="1"/>
        <end position="624"/>
    </location>
</feature>
<feature type="region of interest" description="A; substrate-binding" evidence="1">
    <location>
        <begin position="1"/>
        <end position="336"/>
    </location>
</feature>
<feature type="region of interest" description="B" evidence="1">
    <location>
        <begin position="337"/>
        <end position="552"/>
    </location>
</feature>
<feature type="region of interest" description="C" evidence="1">
    <location>
        <begin position="553"/>
        <end position="624"/>
    </location>
</feature>
<evidence type="ECO:0000255" key="1">
    <source>
        <dbReference type="HAMAP-Rule" id="MF_00505"/>
    </source>
</evidence>
<protein>
    <recommendedName>
        <fullName evidence="1">Chaperone protein HtpG</fullName>
    </recommendedName>
    <alternativeName>
        <fullName evidence="1">Heat shock protein HtpG</fullName>
    </alternativeName>
    <alternativeName>
        <fullName evidence="1">High temperature protein G</fullName>
    </alternativeName>
</protein>
<dbReference type="EMBL" id="CP000647">
    <property type="protein sequence ID" value="ABR75907.1"/>
    <property type="molecule type" value="Genomic_DNA"/>
</dbReference>
<dbReference type="RefSeq" id="WP_004177228.1">
    <property type="nucleotide sequence ID" value="NC_009648.1"/>
</dbReference>
<dbReference type="SMR" id="A6T5N6"/>
<dbReference type="STRING" id="272620.KPN_00455"/>
<dbReference type="jPOST" id="A6T5N6"/>
<dbReference type="PaxDb" id="272620-KPN_00455"/>
<dbReference type="EnsemblBacteria" id="ABR75907">
    <property type="protein sequence ID" value="ABR75907"/>
    <property type="gene ID" value="KPN_00455"/>
</dbReference>
<dbReference type="GeneID" id="69756714"/>
<dbReference type="KEGG" id="kpn:KPN_00455"/>
<dbReference type="HOGENOM" id="CLU_006684_3_0_6"/>
<dbReference type="Proteomes" id="UP000000265">
    <property type="component" value="Chromosome"/>
</dbReference>
<dbReference type="GO" id="GO:0005737">
    <property type="term" value="C:cytoplasm"/>
    <property type="evidence" value="ECO:0007669"/>
    <property type="project" value="UniProtKB-SubCell"/>
</dbReference>
<dbReference type="GO" id="GO:0005524">
    <property type="term" value="F:ATP binding"/>
    <property type="evidence" value="ECO:0007669"/>
    <property type="project" value="UniProtKB-UniRule"/>
</dbReference>
<dbReference type="GO" id="GO:0016887">
    <property type="term" value="F:ATP hydrolysis activity"/>
    <property type="evidence" value="ECO:0007669"/>
    <property type="project" value="InterPro"/>
</dbReference>
<dbReference type="GO" id="GO:0140662">
    <property type="term" value="F:ATP-dependent protein folding chaperone"/>
    <property type="evidence" value="ECO:0007669"/>
    <property type="project" value="InterPro"/>
</dbReference>
<dbReference type="GO" id="GO:0051082">
    <property type="term" value="F:unfolded protein binding"/>
    <property type="evidence" value="ECO:0007669"/>
    <property type="project" value="UniProtKB-UniRule"/>
</dbReference>
<dbReference type="CDD" id="cd16927">
    <property type="entry name" value="HATPase_Hsp90-like"/>
    <property type="match status" value="1"/>
</dbReference>
<dbReference type="FunFam" id="1.20.120.790:FF:000002">
    <property type="entry name" value="Molecular chaperone HtpG"/>
    <property type="match status" value="1"/>
</dbReference>
<dbReference type="FunFam" id="3.30.230.80:FF:000002">
    <property type="entry name" value="Molecular chaperone HtpG"/>
    <property type="match status" value="1"/>
</dbReference>
<dbReference type="FunFam" id="3.30.565.10:FF:000009">
    <property type="entry name" value="Molecular chaperone HtpG"/>
    <property type="match status" value="1"/>
</dbReference>
<dbReference type="FunFam" id="3.40.50.11260:FF:000002">
    <property type="entry name" value="Molecular chaperone HtpG"/>
    <property type="match status" value="1"/>
</dbReference>
<dbReference type="Gene3D" id="3.30.230.80">
    <property type="match status" value="1"/>
</dbReference>
<dbReference type="Gene3D" id="3.40.50.11260">
    <property type="match status" value="1"/>
</dbReference>
<dbReference type="Gene3D" id="1.20.120.790">
    <property type="entry name" value="Heat shock protein 90, C-terminal domain"/>
    <property type="match status" value="1"/>
</dbReference>
<dbReference type="Gene3D" id="3.30.565.10">
    <property type="entry name" value="Histidine kinase-like ATPase, C-terminal domain"/>
    <property type="match status" value="1"/>
</dbReference>
<dbReference type="HAMAP" id="MF_00505">
    <property type="entry name" value="HSP90"/>
    <property type="match status" value="1"/>
</dbReference>
<dbReference type="InterPro" id="IPR036890">
    <property type="entry name" value="HATPase_C_sf"/>
</dbReference>
<dbReference type="InterPro" id="IPR019805">
    <property type="entry name" value="Heat_shock_protein_90_CS"/>
</dbReference>
<dbReference type="InterPro" id="IPR037196">
    <property type="entry name" value="HSP90_C"/>
</dbReference>
<dbReference type="InterPro" id="IPR001404">
    <property type="entry name" value="Hsp90_fam"/>
</dbReference>
<dbReference type="InterPro" id="IPR020575">
    <property type="entry name" value="Hsp90_N"/>
</dbReference>
<dbReference type="InterPro" id="IPR020568">
    <property type="entry name" value="Ribosomal_Su5_D2-typ_SF"/>
</dbReference>
<dbReference type="NCBIfam" id="NF003555">
    <property type="entry name" value="PRK05218.1"/>
    <property type="match status" value="1"/>
</dbReference>
<dbReference type="PANTHER" id="PTHR11528">
    <property type="entry name" value="HEAT SHOCK PROTEIN 90 FAMILY MEMBER"/>
    <property type="match status" value="1"/>
</dbReference>
<dbReference type="Pfam" id="PF13589">
    <property type="entry name" value="HATPase_c_3"/>
    <property type="match status" value="1"/>
</dbReference>
<dbReference type="Pfam" id="PF00183">
    <property type="entry name" value="HSP90"/>
    <property type="match status" value="1"/>
</dbReference>
<dbReference type="PIRSF" id="PIRSF002583">
    <property type="entry name" value="Hsp90"/>
    <property type="match status" value="1"/>
</dbReference>
<dbReference type="PRINTS" id="PR00775">
    <property type="entry name" value="HEATSHOCK90"/>
</dbReference>
<dbReference type="SMART" id="SM00387">
    <property type="entry name" value="HATPase_c"/>
    <property type="match status" value="1"/>
</dbReference>
<dbReference type="SUPFAM" id="SSF55874">
    <property type="entry name" value="ATPase domain of HSP90 chaperone/DNA topoisomerase II/histidine kinase"/>
    <property type="match status" value="1"/>
</dbReference>
<dbReference type="SUPFAM" id="SSF110942">
    <property type="entry name" value="HSP90 C-terminal domain"/>
    <property type="match status" value="1"/>
</dbReference>
<dbReference type="SUPFAM" id="SSF54211">
    <property type="entry name" value="Ribosomal protein S5 domain 2-like"/>
    <property type="match status" value="1"/>
</dbReference>
<dbReference type="PROSITE" id="PS00298">
    <property type="entry name" value="HSP90"/>
    <property type="match status" value="1"/>
</dbReference>
<accession>A6T5N6</accession>
<gene>
    <name evidence="1" type="primary">htpG</name>
    <name type="ordered locus">KPN78578_04460</name>
    <name type="ORF">KPN_00455</name>
</gene>
<comment type="function">
    <text evidence="1">Molecular chaperone. Has ATPase activity.</text>
</comment>
<comment type="subunit">
    <text evidence="1">Homodimer.</text>
</comment>
<comment type="subcellular location">
    <subcellularLocation>
        <location evidence="1">Cytoplasm</location>
    </subcellularLocation>
</comment>
<comment type="similarity">
    <text evidence="1">Belongs to the heat shock protein 90 family.</text>
</comment>
<proteinExistence type="inferred from homology"/>
<name>HTPG_KLEP7</name>
<sequence>MKGQETRGFQSEVKQLLHLMIHSLYSNKEIFLRELISNASDAADKLRFRALSQPDLYEGDGELRVRVSFDKDNRTLTIADNGIGMNREEVIDHLGTIAKSGTKAFLESMGSDQAKDSQLIGQFGVGFYSAFIVADKVTVRTRAAGDKPENGVFWESAGEGEYTVADITKADRGTEITLHLREGEDDFLNDWRVRSIISKYSDHIALPVEIEKREEKDGETVISWEKINKAQALWTRSKSEVNDDEYKEFYKHIAHDYSDPLTWSHNRVEGKQEYTSLLYIPSQAPWDMWNRDHKHGLKLYVQRVFIMDDAEQFMPNYLRFVRGLIDSNDLPLNVSREILQDSSVTRNLRTALTKRALQMLDKLAKDDAEKYQTFWKQFGLVLKEGPAEDPSNQEAIAKLLRFATTHTDSSAQTVSLEEYVSRMKEGQEKIYYITADSYAAAKSSPHLELLRKKGIEVLLLSDRIDEWMMSYLTEFDGKAFQSVAKADESLDKLADEVDESTKEAEKALEPFVERVKNLLGDRVKEVRLTHRLTDTPAIVTTDADEMSTQMAKLFAAAGQAAPEVKYIFELNPAHQLVKRAADTQDDAQFGEWVELLLDQALLAERGTLEDPNQFIRRMNQLLAS</sequence>
<organism>
    <name type="scientific">Klebsiella pneumoniae subsp. pneumoniae (strain ATCC 700721 / MGH 78578)</name>
    <dbReference type="NCBI Taxonomy" id="272620"/>
    <lineage>
        <taxon>Bacteria</taxon>
        <taxon>Pseudomonadati</taxon>
        <taxon>Pseudomonadota</taxon>
        <taxon>Gammaproteobacteria</taxon>
        <taxon>Enterobacterales</taxon>
        <taxon>Enterobacteriaceae</taxon>
        <taxon>Klebsiella/Raoultella group</taxon>
        <taxon>Klebsiella</taxon>
        <taxon>Klebsiella pneumoniae complex</taxon>
    </lineage>
</organism>